<keyword id="KW-0223">Dioxygenase</keyword>
<keyword id="KW-0408">Iron</keyword>
<keyword id="KW-0479">Metal-binding</keyword>
<keyword id="KW-0560">Oxidoreductase</keyword>
<keyword id="KW-0847">Vitamin C</keyword>
<sequence length="221" mass="25129">MNFLTNQLLIQEEIEALIKNLNKENTLWEDGKKTAGSHASMVKNNLQLNRESEISKKLSHLIKKKILSSPLIKSFALPKIIHGIMFTKSLKDMQYGRHIDNPFMSSGRADLSFTISLTDKNTYDGGELIIEEMNSEKEFKLNAGEIIIYPSTYLHSVKEIKNGERLVCVGWIESYVKSIEQREYLFDLDAGAKGLLAKNGRSDELDLIFKSYSNLLRLLGN</sequence>
<dbReference type="EC" id="1.14.11.-" evidence="1"/>
<dbReference type="EMBL" id="CP000111">
    <property type="protein sequence ID" value="ABB50321.1"/>
    <property type="molecule type" value="Genomic_DNA"/>
</dbReference>
<dbReference type="RefSeq" id="WP_011376808.1">
    <property type="nucleotide sequence ID" value="NC_007577.1"/>
</dbReference>
<dbReference type="SMR" id="Q319X4"/>
<dbReference type="STRING" id="74546.PMT9312_1262"/>
<dbReference type="KEGG" id="pmi:PMT9312_1262"/>
<dbReference type="eggNOG" id="COG3128">
    <property type="taxonomic scope" value="Bacteria"/>
</dbReference>
<dbReference type="HOGENOM" id="CLU_106663_0_0_3"/>
<dbReference type="OrthoDB" id="9812472at2"/>
<dbReference type="Proteomes" id="UP000002715">
    <property type="component" value="Chromosome"/>
</dbReference>
<dbReference type="GO" id="GO:0016706">
    <property type="term" value="F:2-oxoglutarate-dependent dioxygenase activity"/>
    <property type="evidence" value="ECO:0007669"/>
    <property type="project" value="UniProtKB-UniRule"/>
</dbReference>
<dbReference type="GO" id="GO:0005506">
    <property type="term" value="F:iron ion binding"/>
    <property type="evidence" value="ECO:0007669"/>
    <property type="project" value="UniProtKB-UniRule"/>
</dbReference>
<dbReference type="GO" id="GO:0031418">
    <property type="term" value="F:L-ascorbic acid binding"/>
    <property type="evidence" value="ECO:0007669"/>
    <property type="project" value="UniProtKB-KW"/>
</dbReference>
<dbReference type="GO" id="GO:0006974">
    <property type="term" value="P:DNA damage response"/>
    <property type="evidence" value="ECO:0007669"/>
    <property type="project" value="TreeGrafter"/>
</dbReference>
<dbReference type="GO" id="GO:0006879">
    <property type="term" value="P:intracellular iron ion homeostasis"/>
    <property type="evidence" value="ECO:0007669"/>
    <property type="project" value="TreeGrafter"/>
</dbReference>
<dbReference type="Gene3D" id="2.60.120.620">
    <property type="entry name" value="q2cbj1_9rhob like domain"/>
    <property type="match status" value="1"/>
</dbReference>
<dbReference type="Gene3D" id="4.10.860.20">
    <property type="entry name" value="Rabenosyn, Rab binding domain"/>
    <property type="match status" value="1"/>
</dbReference>
<dbReference type="HAMAP" id="MF_00657">
    <property type="entry name" value="Hydroxyl_YbiX"/>
    <property type="match status" value="1"/>
</dbReference>
<dbReference type="InterPro" id="IPR005123">
    <property type="entry name" value="Oxoglu/Fe-dep_dioxygenase_dom"/>
</dbReference>
<dbReference type="InterPro" id="IPR023550">
    <property type="entry name" value="PKHD_hydroxylase"/>
</dbReference>
<dbReference type="InterPro" id="IPR006620">
    <property type="entry name" value="Pro_4_hyd_alph"/>
</dbReference>
<dbReference type="InterPro" id="IPR044862">
    <property type="entry name" value="Pro_4_hyd_alph_FE2OG_OXY"/>
</dbReference>
<dbReference type="NCBIfam" id="NF003974">
    <property type="entry name" value="PRK05467.1-3"/>
    <property type="match status" value="1"/>
</dbReference>
<dbReference type="PANTHER" id="PTHR41536">
    <property type="entry name" value="PKHD-TYPE HYDROXYLASE YBIX"/>
    <property type="match status" value="1"/>
</dbReference>
<dbReference type="PANTHER" id="PTHR41536:SF1">
    <property type="entry name" value="PKHD-TYPE HYDROXYLASE YBIX"/>
    <property type="match status" value="1"/>
</dbReference>
<dbReference type="Pfam" id="PF13640">
    <property type="entry name" value="2OG-FeII_Oxy_3"/>
    <property type="match status" value="1"/>
</dbReference>
<dbReference type="SMART" id="SM00702">
    <property type="entry name" value="P4Hc"/>
    <property type="match status" value="1"/>
</dbReference>
<dbReference type="PROSITE" id="PS51471">
    <property type="entry name" value="FE2OG_OXY"/>
    <property type="match status" value="1"/>
</dbReference>
<comment type="cofactor">
    <cofactor evidence="1">
        <name>Fe(2+)</name>
        <dbReference type="ChEBI" id="CHEBI:29033"/>
    </cofactor>
    <text evidence="1">Binds 1 Fe(2+) ion per subunit.</text>
</comment>
<comment type="cofactor">
    <cofactor evidence="1">
        <name>L-ascorbate</name>
        <dbReference type="ChEBI" id="CHEBI:38290"/>
    </cofactor>
</comment>
<name>Y1262_PROM9</name>
<protein>
    <recommendedName>
        <fullName evidence="1">PKHD-type hydroxylase PMT9312_1262</fullName>
        <ecNumber evidence="1">1.14.11.-</ecNumber>
    </recommendedName>
</protein>
<feature type="chain" id="PRO_0000346504" description="PKHD-type hydroxylase PMT9312_1262">
    <location>
        <begin position="1"/>
        <end position="221"/>
    </location>
</feature>
<feature type="domain" description="Fe2OG dioxygenase" evidence="1">
    <location>
        <begin position="80"/>
        <end position="174"/>
    </location>
</feature>
<feature type="binding site" evidence="1">
    <location>
        <position position="98"/>
    </location>
    <ligand>
        <name>Fe cation</name>
        <dbReference type="ChEBI" id="CHEBI:24875"/>
    </ligand>
</feature>
<feature type="binding site" evidence="1">
    <location>
        <position position="100"/>
    </location>
    <ligand>
        <name>Fe cation</name>
        <dbReference type="ChEBI" id="CHEBI:24875"/>
    </ligand>
</feature>
<feature type="binding site" evidence="1">
    <location>
        <position position="155"/>
    </location>
    <ligand>
        <name>Fe cation</name>
        <dbReference type="ChEBI" id="CHEBI:24875"/>
    </ligand>
</feature>
<feature type="binding site" evidence="1">
    <location>
        <position position="165"/>
    </location>
    <ligand>
        <name>2-oxoglutarate</name>
        <dbReference type="ChEBI" id="CHEBI:16810"/>
    </ligand>
</feature>
<accession>Q319X4</accession>
<reference key="1">
    <citation type="journal article" date="2006" name="Science">
        <title>Genomic islands and the ecology and evolution of Prochlorococcus.</title>
        <authorList>
            <person name="Coleman M.L."/>
            <person name="Sullivan M.B."/>
            <person name="Martiny A.C."/>
            <person name="Steglich C."/>
            <person name="Barry K."/>
            <person name="Delong E.F."/>
            <person name="Chisholm S.W."/>
        </authorList>
    </citation>
    <scope>NUCLEOTIDE SEQUENCE [LARGE SCALE GENOMIC DNA]</scope>
    <source>
        <strain>MIT 9312</strain>
    </source>
</reference>
<evidence type="ECO:0000255" key="1">
    <source>
        <dbReference type="HAMAP-Rule" id="MF_00657"/>
    </source>
</evidence>
<proteinExistence type="inferred from homology"/>
<gene>
    <name type="ordered locus">PMT9312_1262</name>
</gene>
<organism>
    <name type="scientific">Prochlorococcus marinus (strain MIT 9312)</name>
    <dbReference type="NCBI Taxonomy" id="74546"/>
    <lineage>
        <taxon>Bacteria</taxon>
        <taxon>Bacillati</taxon>
        <taxon>Cyanobacteriota</taxon>
        <taxon>Cyanophyceae</taxon>
        <taxon>Synechococcales</taxon>
        <taxon>Prochlorococcaceae</taxon>
        <taxon>Prochlorococcus</taxon>
    </lineage>
</organism>